<dbReference type="EMBL" id="CP001407">
    <property type="protein sequence ID" value="ACO29412.1"/>
    <property type="molecule type" value="Genomic_DNA"/>
</dbReference>
<dbReference type="RefSeq" id="WP_012680304.1">
    <property type="nucleotide sequence ID" value="NC_012472.1"/>
</dbReference>
<dbReference type="SMR" id="C1EZN6"/>
<dbReference type="KEGG" id="bcx:BCA_0919"/>
<dbReference type="Proteomes" id="UP000002210">
    <property type="component" value="Chromosome"/>
</dbReference>
<dbReference type="GO" id="GO:0005886">
    <property type="term" value="C:plasma membrane"/>
    <property type="evidence" value="ECO:0007669"/>
    <property type="project" value="UniProtKB-SubCell"/>
</dbReference>
<dbReference type="InterPro" id="IPR007383">
    <property type="entry name" value="DUF445"/>
</dbReference>
<dbReference type="InterPro" id="IPR016991">
    <property type="entry name" value="UCP032178"/>
</dbReference>
<dbReference type="PANTHER" id="PTHR35791">
    <property type="entry name" value="UPF0754 MEMBRANE PROTEIN YHEB"/>
    <property type="match status" value="1"/>
</dbReference>
<dbReference type="PANTHER" id="PTHR35791:SF1">
    <property type="entry name" value="UPF0754 MEMBRANE PROTEIN YHEB"/>
    <property type="match status" value="1"/>
</dbReference>
<dbReference type="Pfam" id="PF04286">
    <property type="entry name" value="DUF445"/>
    <property type="match status" value="1"/>
</dbReference>
<dbReference type="PIRSF" id="PIRSF032178">
    <property type="entry name" value="UCP032178"/>
    <property type="match status" value="1"/>
</dbReference>
<protein>
    <recommendedName>
        <fullName>UPF0754 membrane protein BCA_0919</fullName>
    </recommendedName>
</protein>
<accession>C1EZN6</accession>
<feature type="chain" id="PRO_0000388268" description="UPF0754 membrane protein BCA_0919">
    <location>
        <begin position="1"/>
        <end position="378"/>
    </location>
</feature>
<feature type="transmembrane region" description="Helical" evidence="2">
    <location>
        <begin position="1"/>
        <end position="21"/>
    </location>
</feature>
<feature type="transmembrane region" description="Helical" evidence="2">
    <location>
        <begin position="357"/>
        <end position="377"/>
    </location>
</feature>
<sequence length="378" mass="42851">MNIWLSMLTTTGLGAIIGGFTNHLAIKMLFRPHRPMYIGKFQVPFTPGLIPKRRDELAVQLGKMVVEHLLTPEGIGKKLTNEEFQKGLIHWAQVEVGKVMTNEQSLRHMLEKWDVAHVEKEATEKIEQVIIEKIEAFLEEYYTYTWEQALPHSVHEKIENAIPNVSAFILKRATHFFESEEGKSRLSKMIDDFFASRGALLNLVGMFLGNVSVVDRVQPEVIKFLGQDGTKQLLTDVLQKEWEKLKGRDVKELETFVEKEMIVSSILSAVQVEETVSKFLNQSVQQVCEPVRETIIEKVVPGVVTKGLKWGTENVESILNNLHLAEIVQQEVSTFSTERLEDLVLSITKNELKMITYLGALLGGMIGIVQGLLLLFLK</sequence>
<evidence type="ECO:0000250" key="1"/>
<evidence type="ECO:0000255" key="2"/>
<evidence type="ECO:0000305" key="3"/>
<gene>
    <name type="ordered locus">BCA_0919</name>
</gene>
<keyword id="KW-1003">Cell membrane</keyword>
<keyword id="KW-0472">Membrane</keyword>
<keyword id="KW-0812">Transmembrane</keyword>
<keyword id="KW-1133">Transmembrane helix</keyword>
<reference key="1">
    <citation type="submission" date="2009-02" db="EMBL/GenBank/DDBJ databases">
        <title>Genome sequence of Bacillus cereus 03BB102.</title>
        <authorList>
            <person name="Dodson R.J."/>
            <person name="Jackson P."/>
            <person name="Munk A.C."/>
            <person name="Brettin T."/>
            <person name="Bruce D."/>
            <person name="Detter C."/>
            <person name="Tapia R."/>
            <person name="Han C."/>
            <person name="Sutton G."/>
            <person name="Sims D."/>
        </authorList>
    </citation>
    <scope>NUCLEOTIDE SEQUENCE [LARGE SCALE GENOMIC DNA]</scope>
    <source>
        <strain>03BB102</strain>
    </source>
</reference>
<name>Y919_BACC3</name>
<proteinExistence type="inferred from homology"/>
<organism>
    <name type="scientific">Bacillus cereus (strain 03BB102)</name>
    <dbReference type="NCBI Taxonomy" id="572264"/>
    <lineage>
        <taxon>Bacteria</taxon>
        <taxon>Bacillati</taxon>
        <taxon>Bacillota</taxon>
        <taxon>Bacilli</taxon>
        <taxon>Bacillales</taxon>
        <taxon>Bacillaceae</taxon>
        <taxon>Bacillus</taxon>
        <taxon>Bacillus cereus group</taxon>
    </lineage>
</organism>
<comment type="subcellular location">
    <subcellularLocation>
        <location evidence="1">Cell membrane</location>
        <topology evidence="1">Multi-pass membrane protein</topology>
    </subcellularLocation>
</comment>
<comment type="similarity">
    <text evidence="3">Belongs to the UPF0754 family.</text>
</comment>